<reference key="1">
    <citation type="journal article" date="2005" name="J. Bacteriol.">
        <title>Insights on evolution of virulence and resistance from the complete genome analysis of an early methicillin-resistant Staphylococcus aureus strain and a biofilm-producing methicillin-resistant Staphylococcus epidermidis strain.</title>
        <authorList>
            <person name="Gill S.R."/>
            <person name="Fouts D.E."/>
            <person name="Archer G.L."/>
            <person name="Mongodin E.F."/>
            <person name="DeBoy R.T."/>
            <person name="Ravel J."/>
            <person name="Paulsen I.T."/>
            <person name="Kolonay J.F."/>
            <person name="Brinkac L.M."/>
            <person name="Beanan M.J."/>
            <person name="Dodson R.J."/>
            <person name="Daugherty S.C."/>
            <person name="Madupu R."/>
            <person name="Angiuoli S.V."/>
            <person name="Durkin A.S."/>
            <person name="Haft D.H."/>
            <person name="Vamathevan J.J."/>
            <person name="Khouri H."/>
            <person name="Utterback T.R."/>
            <person name="Lee C."/>
            <person name="Dimitrov G."/>
            <person name="Jiang L."/>
            <person name="Qin H."/>
            <person name="Weidman J."/>
            <person name="Tran K."/>
            <person name="Kang K.H."/>
            <person name="Hance I.R."/>
            <person name="Nelson K.E."/>
            <person name="Fraser C.M."/>
        </authorList>
    </citation>
    <scope>NUCLEOTIDE SEQUENCE [LARGE SCALE GENOMIC DNA]</scope>
    <source>
        <strain>ATCC 35984 / DSM 28319 / BCRC 17069 / CCUG 31568 / BM 3577 / RP62A</strain>
    </source>
</reference>
<comment type="function">
    <text evidence="1">Member of the two-component regulatory system WalK/WalR.</text>
</comment>
<comment type="subcellular location">
    <subcellularLocation>
        <location evidence="4">Cytoplasm</location>
    </subcellularLocation>
</comment>
<comment type="PTM">
    <text evidence="1">Phosphorylated by WalK.</text>
</comment>
<keyword id="KW-0010">Activator</keyword>
<keyword id="KW-0963">Cytoplasm</keyword>
<keyword id="KW-0238">DNA-binding</keyword>
<keyword id="KW-0597">Phosphoprotein</keyword>
<keyword id="KW-1185">Reference proteome</keyword>
<keyword id="KW-0804">Transcription</keyword>
<keyword id="KW-0805">Transcription regulation</keyword>
<keyword id="KW-0902">Two-component regulatory system</keyword>
<name>WALR_STAEQ</name>
<organism>
    <name type="scientific">Staphylococcus epidermidis (strain ATCC 35984 / DSM 28319 / BCRC 17069 / CCUG 31568 / BM 3577 / RP62A)</name>
    <dbReference type="NCBI Taxonomy" id="176279"/>
    <lineage>
        <taxon>Bacteria</taxon>
        <taxon>Bacillati</taxon>
        <taxon>Bacillota</taxon>
        <taxon>Bacilli</taxon>
        <taxon>Bacillales</taxon>
        <taxon>Staphylococcaceae</taxon>
        <taxon>Staphylococcus</taxon>
    </lineage>
</organism>
<gene>
    <name type="primary">walR</name>
    <name type="synonym">yycF</name>
    <name type="ordered locus">SERP2534</name>
</gene>
<accession>Q5HK18</accession>
<protein>
    <recommendedName>
        <fullName evidence="4">Transcriptional regulatory protein WalR</fullName>
    </recommendedName>
</protein>
<sequence length="233" mass="27135">MARKVVVVDDEKPIADILEFNLKKEGYDVYCAYDGNDAVDLIYEEEPDIVLLDIMLPGRDGMEVCREVRKKYEMPIIMLTAKDSEIDKVLGLELGADDYVTKPFSTRELIARVKANLRRHYSQPAQEVSGATNEITIKDIVIYPDAYSIKKRGEDIELTHREFELFHYLSKHMGQVMTREHLLQTVWGYDYFGDVRTVDVTIRRLREKIEDDPSHPEYIVTRRGVGYFLQQHD</sequence>
<dbReference type="EMBL" id="CP000029">
    <property type="protein sequence ID" value="AAW53342.1"/>
    <property type="molecule type" value="Genomic_DNA"/>
</dbReference>
<dbReference type="RefSeq" id="WP_001831816.1">
    <property type="nucleotide sequence ID" value="NC_002976.3"/>
</dbReference>
<dbReference type="SMR" id="Q5HK18"/>
<dbReference type="STRING" id="176279.SERP2534"/>
<dbReference type="GeneID" id="50017434"/>
<dbReference type="KEGG" id="ser:SERP2534"/>
<dbReference type="eggNOG" id="COG0745">
    <property type="taxonomic scope" value="Bacteria"/>
</dbReference>
<dbReference type="HOGENOM" id="CLU_000445_30_4_9"/>
<dbReference type="Proteomes" id="UP000000531">
    <property type="component" value="Chromosome"/>
</dbReference>
<dbReference type="GO" id="GO:0005829">
    <property type="term" value="C:cytosol"/>
    <property type="evidence" value="ECO:0007669"/>
    <property type="project" value="TreeGrafter"/>
</dbReference>
<dbReference type="GO" id="GO:0032993">
    <property type="term" value="C:protein-DNA complex"/>
    <property type="evidence" value="ECO:0007669"/>
    <property type="project" value="TreeGrafter"/>
</dbReference>
<dbReference type="GO" id="GO:0000156">
    <property type="term" value="F:phosphorelay response regulator activity"/>
    <property type="evidence" value="ECO:0007669"/>
    <property type="project" value="TreeGrafter"/>
</dbReference>
<dbReference type="GO" id="GO:0000976">
    <property type="term" value="F:transcription cis-regulatory region binding"/>
    <property type="evidence" value="ECO:0007669"/>
    <property type="project" value="TreeGrafter"/>
</dbReference>
<dbReference type="GO" id="GO:0006355">
    <property type="term" value="P:regulation of DNA-templated transcription"/>
    <property type="evidence" value="ECO:0007669"/>
    <property type="project" value="InterPro"/>
</dbReference>
<dbReference type="CDD" id="cd17614">
    <property type="entry name" value="REC_OmpR_YycF-like"/>
    <property type="match status" value="1"/>
</dbReference>
<dbReference type="CDD" id="cd00383">
    <property type="entry name" value="trans_reg_C"/>
    <property type="match status" value="1"/>
</dbReference>
<dbReference type="FunFam" id="1.10.10.10:FF:000089">
    <property type="entry name" value="Alkaline phosphatase synthesis response regulator"/>
    <property type="match status" value="1"/>
</dbReference>
<dbReference type="FunFam" id="3.40.50.2300:FF:000052">
    <property type="entry name" value="DNA-binding response regulator YycF"/>
    <property type="match status" value="1"/>
</dbReference>
<dbReference type="Gene3D" id="3.40.50.2300">
    <property type="match status" value="1"/>
</dbReference>
<dbReference type="Gene3D" id="6.10.250.690">
    <property type="match status" value="1"/>
</dbReference>
<dbReference type="Gene3D" id="1.10.10.10">
    <property type="entry name" value="Winged helix-like DNA-binding domain superfamily/Winged helix DNA-binding domain"/>
    <property type="match status" value="1"/>
</dbReference>
<dbReference type="InterPro" id="IPR011006">
    <property type="entry name" value="CheY-like_superfamily"/>
</dbReference>
<dbReference type="InterPro" id="IPR001867">
    <property type="entry name" value="OmpR/PhoB-type_DNA-bd"/>
</dbReference>
<dbReference type="InterPro" id="IPR047791">
    <property type="entry name" value="Resp_reg_WalR"/>
</dbReference>
<dbReference type="InterPro" id="IPR016032">
    <property type="entry name" value="Sig_transdc_resp-reg_C-effctor"/>
</dbReference>
<dbReference type="InterPro" id="IPR001789">
    <property type="entry name" value="Sig_transdc_resp-reg_receiver"/>
</dbReference>
<dbReference type="InterPro" id="IPR039420">
    <property type="entry name" value="WalR-like"/>
</dbReference>
<dbReference type="InterPro" id="IPR036388">
    <property type="entry name" value="WH-like_DNA-bd_sf"/>
</dbReference>
<dbReference type="NCBIfam" id="NF040534">
    <property type="entry name" value="resp_reg_YycF"/>
    <property type="match status" value="1"/>
</dbReference>
<dbReference type="PANTHER" id="PTHR48111:SF40">
    <property type="entry name" value="PHOSPHATE REGULON TRANSCRIPTIONAL REGULATORY PROTEIN PHOB"/>
    <property type="match status" value="1"/>
</dbReference>
<dbReference type="PANTHER" id="PTHR48111">
    <property type="entry name" value="REGULATOR OF RPOS"/>
    <property type="match status" value="1"/>
</dbReference>
<dbReference type="Pfam" id="PF00072">
    <property type="entry name" value="Response_reg"/>
    <property type="match status" value="1"/>
</dbReference>
<dbReference type="Pfam" id="PF00486">
    <property type="entry name" value="Trans_reg_C"/>
    <property type="match status" value="1"/>
</dbReference>
<dbReference type="SMART" id="SM00448">
    <property type="entry name" value="REC"/>
    <property type="match status" value="1"/>
</dbReference>
<dbReference type="SMART" id="SM00862">
    <property type="entry name" value="Trans_reg_C"/>
    <property type="match status" value="1"/>
</dbReference>
<dbReference type="SUPFAM" id="SSF46894">
    <property type="entry name" value="C-terminal effector domain of the bipartite response regulators"/>
    <property type="match status" value="1"/>
</dbReference>
<dbReference type="SUPFAM" id="SSF52172">
    <property type="entry name" value="CheY-like"/>
    <property type="match status" value="1"/>
</dbReference>
<dbReference type="PROSITE" id="PS51755">
    <property type="entry name" value="OMPR_PHOB"/>
    <property type="match status" value="1"/>
</dbReference>
<dbReference type="PROSITE" id="PS50110">
    <property type="entry name" value="RESPONSE_REGULATORY"/>
    <property type="match status" value="1"/>
</dbReference>
<proteinExistence type="inferred from homology"/>
<feature type="chain" id="PRO_0000353047" description="Transcriptional regulatory protein WalR">
    <location>
        <begin position="1"/>
        <end position="233"/>
    </location>
</feature>
<feature type="domain" description="Response regulatory" evidence="2">
    <location>
        <begin position="4"/>
        <end position="117"/>
    </location>
</feature>
<feature type="DNA-binding region" description="OmpR/PhoB-type" evidence="3">
    <location>
        <begin position="132"/>
        <end position="231"/>
    </location>
</feature>
<feature type="modified residue" description="4-aspartylphosphate" evidence="2">
    <location>
        <position position="53"/>
    </location>
</feature>
<evidence type="ECO:0000250" key="1">
    <source>
        <dbReference type="UniProtKB" id="Q2G2U6"/>
    </source>
</evidence>
<evidence type="ECO:0000255" key="2">
    <source>
        <dbReference type="PROSITE-ProRule" id="PRU00169"/>
    </source>
</evidence>
<evidence type="ECO:0000255" key="3">
    <source>
        <dbReference type="PROSITE-ProRule" id="PRU01091"/>
    </source>
</evidence>
<evidence type="ECO:0000305" key="4"/>